<proteinExistence type="inferred from homology"/>
<sequence>MPFCSYQEGLKVASDLGNKAIQTEASLSSLSPVASPIPTLQKAFPIYISAAEAYGHLLSSKLVPQSDIETVKRKWRLVLERAEKVKSRIEQLGGHVAKAEIGDRGEEIAVLRRASLINGVAVELWRPPGDTFDAGEPYREAVQPELAAAQLDMDPEWRDIQADCWLHQAPNEGDWVMRQGPVSDCSVVAAMGVGIKHAGQFGTAFGWENLYPQDAHGRPRRSKNGKHILKLLLNGAWRSVVLDSLLPFSKRDKTPLFTTCHPAPHILPTSVGSPWAPLALKGYFKVHGGYSLRGSNPSSDIYEFMGWIPERIGLKEGFQREKEWKRMKEAWHKGNVMVSLGTGSKVSEGLVKLHAYGVIRLREEGHERILDIFDPGATSFTMSWDQVCAEFEALHLNWKPSVMPNTATRHWSWPKPPDLPSDADPGMMNTRYRLHVNASSPSSSLSEVWILLSQHITSRDRPLDDIALHVFEGLGPNNSRNLGAIYSEGLERTNPYTNSNHLLVRYQLRRPTSDLTLIPSRDRGIDQTGFTLNAFAPASISLSLERISRTLPFTQRISGNLTDRSAGGHPGWPTHMTNPQYKVVVRPGEGKSEISGRIILHGEKDVPWNVKLIWGRGQLVYELSEDLIVADTGSYSYGIAYCDIPELQPDTYTLIVSAFEPGQTGLFSLSLEATAPVSIIPIAAEGAGMYNRVVNGFWTERTAGGRPSGGTYESNPRVEMVLSKPATIQSRLYLPTRSPVPINLTIFKRAQGGALGEQLVTTGPYSDSICGVSTGKMKLDSGVYLLVPSSYEKSKGGWVLKIWSDVALSAEIVG</sequence>
<evidence type="ECO:0000250" key="1"/>
<evidence type="ECO:0000255" key="2">
    <source>
        <dbReference type="PROSITE-ProRule" id="PRU00239"/>
    </source>
</evidence>
<evidence type="ECO:0000305" key="3"/>
<organism>
    <name type="scientific">Cryptococcus neoformans var. neoformans serotype D (strain JEC21 / ATCC MYA-565)</name>
    <name type="common">Filobasidiella neoformans</name>
    <dbReference type="NCBI Taxonomy" id="214684"/>
    <lineage>
        <taxon>Eukaryota</taxon>
        <taxon>Fungi</taxon>
        <taxon>Dikarya</taxon>
        <taxon>Basidiomycota</taxon>
        <taxon>Agaricomycotina</taxon>
        <taxon>Tremellomycetes</taxon>
        <taxon>Tremellales</taxon>
        <taxon>Cryptococcaceae</taxon>
        <taxon>Cryptococcus</taxon>
        <taxon>Cryptococcus neoformans species complex</taxon>
    </lineage>
</organism>
<dbReference type="EC" id="3.4.22.-"/>
<dbReference type="EMBL" id="AE017348">
    <property type="protein sequence ID" value="AAW45112.2"/>
    <property type="molecule type" value="Genomic_DNA"/>
</dbReference>
<dbReference type="RefSeq" id="XP_572419.1">
    <property type="nucleotide sequence ID" value="XM_572419.1"/>
</dbReference>
<dbReference type="SMR" id="P0CQ06"/>
<dbReference type="STRING" id="214684.P0CQ06"/>
<dbReference type="PaxDb" id="214684-P0CQ06"/>
<dbReference type="EnsemblFungi" id="AAW45112">
    <property type="protein sequence ID" value="AAW45112"/>
    <property type="gene ID" value="CNH02440"/>
</dbReference>
<dbReference type="VEuPathDB" id="FungiDB:CNH02440"/>
<dbReference type="eggNOG" id="KOG0045">
    <property type="taxonomic scope" value="Eukaryota"/>
</dbReference>
<dbReference type="InParanoid" id="P0CQ06"/>
<dbReference type="OrthoDB" id="167576at2759"/>
<dbReference type="Proteomes" id="UP000002149">
    <property type="component" value="Chromosome 8"/>
</dbReference>
<dbReference type="GO" id="GO:0004198">
    <property type="term" value="F:calcium-dependent cysteine-type endopeptidase activity"/>
    <property type="evidence" value="ECO:0007669"/>
    <property type="project" value="InterPro"/>
</dbReference>
<dbReference type="GO" id="GO:0004197">
    <property type="term" value="F:cysteine-type endopeptidase activity"/>
    <property type="evidence" value="ECO:0000318"/>
    <property type="project" value="GO_Central"/>
</dbReference>
<dbReference type="GO" id="GO:0006508">
    <property type="term" value="P:proteolysis"/>
    <property type="evidence" value="ECO:0000318"/>
    <property type="project" value="GO_Central"/>
</dbReference>
<dbReference type="Gene3D" id="2.60.120.380">
    <property type="match status" value="2"/>
</dbReference>
<dbReference type="Gene3D" id="3.90.70.10">
    <property type="entry name" value="Cysteine proteinases"/>
    <property type="match status" value="1"/>
</dbReference>
<dbReference type="InterPro" id="IPR022683">
    <property type="entry name" value="Calpain_III"/>
</dbReference>
<dbReference type="InterPro" id="IPR036213">
    <property type="entry name" value="Calpain_III_sf"/>
</dbReference>
<dbReference type="InterPro" id="IPR051297">
    <property type="entry name" value="PalB/RIM13_Calpain-like"/>
</dbReference>
<dbReference type="InterPro" id="IPR038765">
    <property type="entry name" value="Papain-like_cys_pep_sf"/>
</dbReference>
<dbReference type="InterPro" id="IPR001300">
    <property type="entry name" value="Peptidase_C2_calpain_cat"/>
</dbReference>
<dbReference type="PANTHER" id="PTHR46143">
    <property type="entry name" value="CALPAIN-7"/>
    <property type="match status" value="1"/>
</dbReference>
<dbReference type="PANTHER" id="PTHR46143:SF1">
    <property type="entry name" value="CALPAIN-7"/>
    <property type="match status" value="1"/>
</dbReference>
<dbReference type="Pfam" id="PF00648">
    <property type="entry name" value="Peptidase_C2"/>
    <property type="match status" value="1"/>
</dbReference>
<dbReference type="SMART" id="SM00720">
    <property type="entry name" value="calpain_III"/>
    <property type="match status" value="1"/>
</dbReference>
<dbReference type="SMART" id="SM00230">
    <property type="entry name" value="CysPc"/>
    <property type="match status" value="1"/>
</dbReference>
<dbReference type="SUPFAM" id="SSF49758">
    <property type="entry name" value="Calpain large subunit, middle domain (domain III)"/>
    <property type="match status" value="3"/>
</dbReference>
<dbReference type="SUPFAM" id="SSF54001">
    <property type="entry name" value="Cysteine proteinases"/>
    <property type="match status" value="1"/>
</dbReference>
<dbReference type="PROSITE" id="PS50203">
    <property type="entry name" value="CALPAIN_CAT"/>
    <property type="match status" value="1"/>
</dbReference>
<reference key="1">
    <citation type="journal article" date="2005" name="Science">
        <title>The genome of the basidiomycetous yeast and human pathogen Cryptococcus neoformans.</title>
        <authorList>
            <person name="Loftus B.J."/>
            <person name="Fung E."/>
            <person name="Roncaglia P."/>
            <person name="Rowley D."/>
            <person name="Amedeo P."/>
            <person name="Bruno D."/>
            <person name="Vamathevan J."/>
            <person name="Miranda M."/>
            <person name="Anderson I.J."/>
            <person name="Fraser J.A."/>
            <person name="Allen J.E."/>
            <person name="Bosdet I.E."/>
            <person name="Brent M.R."/>
            <person name="Chiu R."/>
            <person name="Doering T.L."/>
            <person name="Donlin M.J."/>
            <person name="D'Souza C.A."/>
            <person name="Fox D.S."/>
            <person name="Grinberg V."/>
            <person name="Fu J."/>
            <person name="Fukushima M."/>
            <person name="Haas B.J."/>
            <person name="Huang J.C."/>
            <person name="Janbon G."/>
            <person name="Jones S.J.M."/>
            <person name="Koo H.L."/>
            <person name="Krzywinski M.I."/>
            <person name="Kwon-Chung K.J."/>
            <person name="Lengeler K.B."/>
            <person name="Maiti R."/>
            <person name="Marra M.A."/>
            <person name="Marra R.E."/>
            <person name="Mathewson C.A."/>
            <person name="Mitchell T.G."/>
            <person name="Pertea M."/>
            <person name="Riggs F.R."/>
            <person name="Salzberg S.L."/>
            <person name="Schein J.E."/>
            <person name="Shvartsbeyn A."/>
            <person name="Shin H."/>
            <person name="Shumway M."/>
            <person name="Specht C.A."/>
            <person name="Suh B.B."/>
            <person name="Tenney A."/>
            <person name="Utterback T.R."/>
            <person name="Wickes B.L."/>
            <person name="Wortman J.R."/>
            <person name="Wye N.H."/>
            <person name="Kronstad J.W."/>
            <person name="Lodge J.K."/>
            <person name="Heitman J."/>
            <person name="Davis R.W."/>
            <person name="Fraser C.M."/>
            <person name="Hyman R.W."/>
        </authorList>
    </citation>
    <scope>NUCLEOTIDE SEQUENCE [LARGE SCALE GENOMIC DNA]</scope>
    <source>
        <strain>JEC21 / ATCC MYA-565</strain>
    </source>
</reference>
<protein>
    <recommendedName>
        <fullName>Calpain-like protease palB/RIM13</fullName>
        <ecNumber>3.4.22.-</ecNumber>
    </recommendedName>
    <alternativeName>
        <fullName>Cysteine protease RIM13</fullName>
    </alternativeName>
</protein>
<name>PALB_CRYNJ</name>
<gene>
    <name type="primary">RIM13</name>
    <name type="ordered locus">CNH02440</name>
</gene>
<keyword id="KW-0378">Hydrolase</keyword>
<keyword id="KW-0645">Protease</keyword>
<keyword id="KW-1185">Reference proteome</keyword>
<keyword id="KW-0788">Thiol protease</keyword>
<accession>P0CQ06</accession>
<accession>Q55IT8</accession>
<accession>Q5KCW3</accession>
<feature type="chain" id="PRO_0000207740" description="Calpain-like protease palB/RIM13">
    <location>
        <begin position="1"/>
        <end position="814"/>
    </location>
</feature>
<feature type="domain" description="Calpain catalytic" evidence="2">
    <location>
        <begin position="118"/>
        <end position="400"/>
    </location>
</feature>
<feature type="active site" evidence="2">
    <location>
        <position position="185"/>
    </location>
</feature>
<feature type="active site" evidence="2">
    <location>
        <position position="354"/>
    </location>
</feature>
<comment type="function">
    <text evidence="1">Required for the proteolytic cleavage of the transcription factor RIM101 in response to alkaline ambient pH.</text>
</comment>
<comment type="similarity">
    <text evidence="3">Belongs to the peptidase C2 family. PalB/RIM13 subfamily.</text>
</comment>